<dbReference type="EC" id="4.4.1.21" evidence="1"/>
<dbReference type="EMBL" id="CP001033">
    <property type="protein sequence ID" value="ACB89595.1"/>
    <property type="molecule type" value="Genomic_DNA"/>
</dbReference>
<dbReference type="RefSeq" id="WP_000032551.1">
    <property type="nucleotide sequence ID" value="NC_010582.1"/>
</dbReference>
<dbReference type="SMR" id="B2ISQ8"/>
<dbReference type="KEGG" id="spw:SPCG_0343"/>
<dbReference type="HOGENOM" id="CLU_107531_2_1_9"/>
<dbReference type="GO" id="GO:0005506">
    <property type="term" value="F:iron ion binding"/>
    <property type="evidence" value="ECO:0007669"/>
    <property type="project" value="InterPro"/>
</dbReference>
<dbReference type="GO" id="GO:0043768">
    <property type="term" value="F:S-ribosylhomocysteine lyase activity"/>
    <property type="evidence" value="ECO:0007669"/>
    <property type="project" value="UniProtKB-UniRule"/>
</dbReference>
<dbReference type="GO" id="GO:0009372">
    <property type="term" value="P:quorum sensing"/>
    <property type="evidence" value="ECO:0007669"/>
    <property type="project" value="UniProtKB-UniRule"/>
</dbReference>
<dbReference type="Gene3D" id="3.30.1360.80">
    <property type="entry name" value="S-ribosylhomocysteinase (LuxS)"/>
    <property type="match status" value="1"/>
</dbReference>
<dbReference type="HAMAP" id="MF_00091">
    <property type="entry name" value="LuxS"/>
    <property type="match status" value="1"/>
</dbReference>
<dbReference type="InterPro" id="IPR037005">
    <property type="entry name" value="LuxS_sf"/>
</dbReference>
<dbReference type="InterPro" id="IPR011249">
    <property type="entry name" value="Metalloenz_LuxS/M16"/>
</dbReference>
<dbReference type="InterPro" id="IPR003815">
    <property type="entry name" value="S-ribosylhomocysteinase"/>
</dbReference>
<dbReference type="NCBIfam" id="NF002607">
    <property type="entry name" value="PRK02260.2-5"/>
    <property type="match status" value="1"/>
</dbReference>
<dbReference type="NCBIfam" id="NF002608">
    <property type="entry name" value="PRK02260.3-1"/>
    <property type="match status" value="1"/>
</dbReference>
<dbReference type="PANTHER" id="PTHR35799">
    <property type="entry name" value="S-RIBOSYLHOMOCYSTEINE LYASE"/>
    <property type="match status" value="1"/>
</dbReference>
<dbReference type="PANTHER" id="PTHR35799:SF1">
    <property type="entry name" value="S-RIBOSYLHOMOCYSTEINE LYASE"/>
    <property type="match status" value="1"/>
</dbReference>
<dbReference type="Pfam" id="PF02664">
    <property type="entry name" value="LuxS"/>
    <property type="match status" value="1"/>
</dbReference>
<dbReference type="PIRSF" id="PIRSF006160">
    <property type="entry name" value="AI2"/>
    <property type="match status" value="1"/>
</dbReference>
<dbReference type="PRINTS" id="PR01487">
    <property type="entry name" value="LUXSPROTEIN"/>
</dbReference>
<dbReference type="SUPFAM" id="SSF63411">
    <property type="entry name" value="LuxS/MPP-like metallohydrolase"/>
    <property type="match status" value="1"/>
</dbReference>
<proteinExistence type="inferred from homology"/>
<sequence length="160" mass="17951">MSKEVIVESFELDHTIVKAPYVRLIGEETGPKGDIISNYDIRLVQPNEDSIPTAGLHTIEHLLAKLIRTRIDGMIDCSPFGCRTGFHMIMWGRHTSAKIAAVIKDSLKEIAETTTWEDVPGTTIESCGNYKDHSLFSAKEWARLILEQGISDDAFERHVI</sequence>
<protein>
    <recommendedName>
        <fullName evidence="1">S-ribosylhomocysteine lyase</fullName>
        <ecNumber evidence="1">4.4.1.21</ecNumber>
    </recommendedName>
    <alternativeName>
        <fullName evidence="1">AI-2 synthesis protein</fullName>
    </alternativeName>
    <alternativeName>
        <fullName evidence="1">Autoinducer-2 production protein LuxS</fullName>
    </alternativeName>
</protein>
<keyword id="KW-0071">Autoinducer synthesis</keyword>
<keyword id="KW-0408">Iron</keyword>
<keyword id="KW-0456">Lyase</keyword>
<keyword id="KW-0479">Metal-binding</keyword>
<keyword id="KW-0673">Quorum sensing</keyword>
<name>LUXS_STRPS</name>
<comment type="function">
    <text evidence="1">Involved in the synthesis of autoinducer 2 (AI-2) which is secreted by bacteria and is used to communicate both the cell density and the metabolic potential of the environment. The regulation of gene expression in response to changes in cell density is called quorum sensing. Catalyzes the transformation of S-ribosylhomocysteine (RHC) to homocysteine (HC) and 4,5-dihydroxy-2,3-pentadione (DPD).</text>
</comment>
<comment type="catalytic activity">
    <reaction evidence="1">
        <text>S-(5-deoxy-D-ribos-5-yl)-L-homocysteine = (S)-4,5-dihydroxypentane-2,3-dione + L-homocysteine</text>
        <dbReference type="Rhea" id="RHEA:17753"/>
        <dbReference type="ChEBI" id="CHEBI:29484"/>
        <dbReference type="ChEBI" id="CHEBI:58195"/>
        <dbReference type="ChEBI" id="CHEBI:58199"/>
        <dbReference type="EC" id="4.4.1.21"/>
    </reaction>
</comment>
<comment type="cofactor">
    <cofactor evidence="1">
        <name>Fe cation</name>
        <dbReference type="ChEBI" id="CHEBI:24875"/>
    </cofactor>
    <text evidence="1">Binds 1 Fe cation per subunit.</text>
</comment>
<comment type="subunit">
    <text evidence="1">Homodimer.</text>
</comment>
<comment type="similarity">
    <text evidence="1">Belongs to the LuxS family.</text>
</comment>
<organism>
    <name type="scientific">Streptococcus pneumoniae (strain CGSP14)</name>
    <dbReference type="NCBI Taxonomy" id="516950"/>
    <lineage>
        <taxon>Bacteria</taxon>
        <taxon>Bacillati</taxon>
        <taxon>Bacillota</taxon>
        <taxon>Bacilli</taxon>
        <taxon>Lactobacillales</taxon>
        <taxon>Streptococcaceae</taxon>
        <taxon>Streptococcus</taxon>
    </lineage>
</organism>
<gene>
    <name evidence="1" type="primary">luxS</name>
    <name type="ordered locus">SPCG_0343</name>
</gene>
<evidence type="ECO:0000255" key="1">
    <source>
        <dbReference type="HAMAP-Rule" id="MF_00091"/>
    </source>
</evidence>
<feature type="chain" id="PRO_1000093332" description="S-ribosylhomocysteine lyase">
    <location>
        <begin position="1"/>
        <end position="160"/>
    </location>
</feature>
<feature type="binding site" evidence="1">
    <location>
        <position position="57"/>
    </location>
    <ligand>
        <name>Fe cation</name>
        <dbReference type="ChEBI" id="CHEBI:24875"/>
    </ligand>
</feature>
<feature type="binding site" evidence="1">
    <location>
        <position position="61"/>
    </location>
    <ligand>
        <name>Fe cation</name>
        <dbReference type="ChEBI" id="CHEBI:24875"/>
    </ligand>
</feature>
<feature type="binding site" evidence="1">
    <location>
        <position position="127"/>
    </location>
    <ligand>
        <name>Fe cation</name>
        <dbReference type="ChEBI" id="CHEBI:24875"/>
    </ligand>
</feature>
<accession>B2ISQ8</accession>
<reference key="1">
    <citation type="journal article" date="2009" name="BMC Genomics">
        <title>Genome evolution driven by host adaptations results in a more virulent and antimicrobial-resistant Streptococcus pneumoniae serotype 14.</title>
        <authorList>
            <person name="Ding F."/>
            <person name="Tang P."/>
            <person name="Hsu M.-H."/>
            <person name="Cui P."/>
            <person name="Hu S."/>
            <person name="Yu J."/>
            <person name="Chiu C.-H."/>
        </authorList>
    </citation>
    <scope>NUCLEOTIDE SEQUENCE [LARGE SCALE GENOMIC DNA]</scope>
    <source>
        <strain>CGSP14</strain>
    </source>
</reference>